<name>MASY_RAPSA</name>
<feature type="chain" id="PRO_0000166871" description="Malate synthase, glyoxysomal">
    <location>
        <begin position="1"/>
        <end position="566"/>
    </location>
</feature>
<feature type="short sequence motif" description="Microbody targeting signal" evidence="2">
    <location>
        <begin position="564"/>
        <end position="566"/>
    </location>
</feature>
<feature type="active site" description="Proton acceptor" evidence="1">
    <location>
        <position position="179"/>
    </location>
</feature>
<feature type="active site" description="Proton donor" evidence="1">
    <location>
        <position position="465"/>
    </location>
</feature>
<dbReference type="EC" id="2.3.3.9"/>
<dbReference type="EMBL" id="X78852">
    <property type="protein sequence ID" value="CAA55407.1"/>
    <property type="molecule type" value="mRNA"/>
</dbReference>
<dbReference type="PIR" id="S44186">
    <property type="entry name" value="S44186"/>
</dbReference>
<dbReference type="SMR" id="Q43827"/>
<dbReference type="UniPathway" id="UPA00703">
    <property type="reaction ID" value="UER00720"/>
</dbReference>
<dbReference type="Proteomes" id="UP000504610">
    <property type="component" value="Unplaced"/>
</dbReference>
<dbReference type="GO" id="GO:0009514">
    <property type="term" value="C:glyoxysome"/>
    <property type="evidence" value="ECO:0007669"/>
    <property type="project" value="UniProtKB-SubCell"/>
</dbReference>
<dbReference type="GO" id="GO:0004474">
    <property type="term" value="F:malate synthase activity"/>
    <property type="evidence" value="ECO:0007669"/>
    <property type="project" value="UniProtKB-EC"/>
</dbReference>
<dbReference type="GO" id="GO:0006097">
    <property type="term" value="P:glyoxylate cycle"/>
    <property type="evidence" value="ECO:0007669"/>
    <property type="project" value="UniProtKB-UniPathway"/>
</dbReference>
<dbReference type="GO" id="GO:0006099">
    <property type="term" value="P:tricarboxylic acid cycle"/>
    <property type="evidence" value="ECO:0007669"/>
    <property type="project" value="UniProtKB-KW"/>
</dbReference>
<dbReference type="CDD" id="cd00727">
    <property type="entry name" value="malate_synt_A"/>
    <property type="match status" value="1"/>
</dbReference>
<dbReference type="FunFam" id="1.20.1220.12:FF:000001">
    <property type="entry name" value="Malate synthase"/>
    <property type="match status" value="1"/>
</dbReference>
<dbReference type="FunFam" id="3.20.20.360:FF:000001">
    <property type="entry name" value="Malate synthase"/>
    <property type="match status" value="1"/>
</dbReference>
<dbReference type="Gene3D" id="3.20.20.360">
    <property type="entry name" value="Malate synthase, domain 3"/>
    <property type="match status" value="1"/>
</dbReference>
<dbReference type="Gene3D" id="1.20.1220.12">
    <property type="entry name" value="Malate synthase, domain III"/>
    <property type="match status" value="1"/>
</dbReference>
<dbReference type="InterPro" id="IPR044856">
    <property type="entry name" value="Malate_synth_C_sf"/>
</dbReference>
<dbReference type="InterPro" id="IPR011076">
    <property type="entry name" value="Malate_synth_sf"/>
</dbReference>
<dbReference type="InterPro" id="IPR006252">
    <property type="entry name" value="Malate_synthA"/>
</dbReference>
<dbReference type="InterPro" id="IPR019830">
    <property type="entry name" value="Malate_synthase_CS"/>
</dbReference>
<dbReference type="InterPro" id="IPR001465">
    <property type="entry name" value="Malate_synthase_TIM"/>
</dbReference>
<dbReference type="InterPro" id="IPR048355">
    <property type="entry name" value="MS_C"/>
</dbReference>
<dbReference type="InterPro" id="IPR048356">
    <property type="entry name" value="MS_N"/>
</dbReference>
<dbReference type="InterPro" id="IPR046363">
    <property type="entry name" value="MS_N_TIM-barrel_dom"/>
</dbReference>
<dbReference type="NCBIfam" id="TIGR01344">
    <property type="entry name" value="malate_syn_A"/>
    <property type="match status" value="1"/>
</dbReference>
<dbReference type="PANTHER" id="PTHR42902">
    <property type="entry name" value="MALATE SYNTHASE"/>
    <property type="match status" value="1"/>
</dbReference>
<dbReference type="PANTHER" id="PTHR42902:SF1">
    <property type="entry name" value="MALATE SYNTHASE 1-RELATED"/>
    <property type="match status" value="1"/>
</dbReference>
<dbReference type="Pfam" id="PF20659">
    <property type="entry name" value="MS_C"/>
    <property type="match status" value="1"/>
</dbReference>
<dbReference type="Pfam" id="PF20656">
    <property type="entry name" value="MS_N"/>
    <property type="match status" value="1"/>
</dbReference>
<dbReference type="Pfam" id="PF01274">
    <property type="entry name" value="MS_TIM-barrel"/>
    <property type="match status" value="1"/>
</dbReference>
<dbReference type="PIRSF" id="PIRSF001363">
    <property type="entry name" value="Malate_synth"/>
    <property type="match status" value="1"/>
</dbReference>
<dbReference type="SUPFAM" id="SSF51645">
    <property type="entry name" value="Malate synthase G"/>
    <property type="match status" value="1"/>
</dbReference>
<dbReference type="PROSITE" id="PS00510">
    <property type="entry name" value="MALATE_SYNTHASE"/>
    <property type="match status" value="1"/>
</dbReference>
<keyword id="KW-0329">Glyoxylate bypass</keyword>
<keyword id="KW-0330">Glyoxysome</keyword>
<keyword id="KW-0576">Peroxisome</keyword>
<keyword id="KW-1185">Reference proteome</keyword>
<keyword id="KW-0808">Transferase</keyword>
<keyword id="KW-0816">Tricarboxylic acid cycle</keyword>
<evidence type="ECO:0000250" key="1"/>
<evidence type="ECO:0000255" key="2"/>
<evidence type="ECO:0000305" key="3"/>
<organism>
    <name type="scientific">Raphanus sativus</name>
    <name type="common">Radish</name>
    <name type="synonym">Raphanus raphanistrum var. sativus</name>
    <dbReference type="NCBI Taxonomy" id="3726"/>
    <lineage>
        <taxon>Eukaryota</taxon>
        <taxon>Viridiplantae</taxon>
        <taxon>Streptophyta</taxon>
        <taxon>Embryophyta</taxon>
        <taxon>Tracheophyta</taxon>
        <taxon>Spermatophyta</taxon>
        <taxon>Magnoliopsida</taxon>
        <taxon>eudicotyledons</taxon>
        <taxon>Gunneridae</taxon>
        <taxon>Pentapetalae</taxon>
        <taxon>rosids</taxon>
        <taxon>malvids</taxon>
        <taxon>Brassicales</taxon>
        <taxon>Brassicaceae</taxon>
        <taxon>Brassiceae</taxon>
        <taxon>Raphanus</taxon>
    </lineage>
</organism>
<sequence>MELETSVYRPNAAVYDSPDGVEVRGRYDQVFAKILTREALGFVAELQRDVSLGMLRYAWSAVERQNVVTTFVLSLGLTLPLSSSEIGEWVCSVCSPPAVADRRVEITGPVERKMIINALNSGAKVFMADFEDALSPSWENLMKGQVNLKDAVDGTITFHDKARNKVYKLNDQVAKLFVRPRGWHLPEAHILIDGEPAIGCLVDFGLYFFHNYSKFRQTQGSGYGPFFYLPKMEHSREAKIWNSVFERAEKMAGIERGSIRATVLIETLPAVFQMNEILYELRDHSVGLNCGRWDYIFSYVKTFQAHPDRLLPDRVLVGMGQHFMRSYSDLLIRTCHKRGVHAWEGMAAQIAIRDDPKANDMALDLVKKDKLRQVRAGHDGTWAAHPGLIPICMDAFGHMGKNPNQIKSMKRDDASAITEEDLLQIPRGVRTLDGLRLNTRVGIQYLAAWLTGSGSVPLYNLTDEDAATAEISRVQNWQWIRYGVELKRRTGLEVRVSKELFGRVVEEEMERIEKEVGKERSLREECIRKLARCLQSSVTAAELDDFLTLAVYDHIVAHYPINVSRL</sequence>
<reference key="1">
    <citation type="submission" date="1994-04" db="EMBL/GenBank/DDBJ databases">
        <title>Overexpression of radish malate synthase in yeast.</title>
        <authorList>
            <person name="Vollack K.U."/>
            <person name="Bach T.J."/>
        </authorList>
    </citation>
    <scope>NUCLEOTIDE SEQUENCE [MRNA]</scope>
    <source>
        <strain>cv. Saxa Knacker</strain>
        <tissue>Seedling</tissue>
    </source>
</reference>
<protein>
    <recommendedName>
        <fullName>Malate synthase, glyoxysomal</fullName>
        <ecNumber>2.3.3.9</ecNumber>
    </recommendedName>
</protein>
<accession>Q43827</accession>
<comment type="catalytic activity">
    <reaction>
        <text>glyoxylate + acetyl-CoA + H2O = (S)-malate + CoA + H(+)</text>
        <dbReference type="Rhea" id="RHEA:18181"/>
        <dbReference type="ChEBI" id="CHEBI:15377"/>
        <dbReference type="ChEBI" id="CHEBI:15378"/>
        <dbReference type="ChEBI" id="CHEBI:15589"/>
        <dbReference type="ChEBI" id="CHEBI:36655"/>
        <dbReference type="ChEBI" id="CHEBI:57287"/>
        <dbReference type="ChEBI" id="CHEBI:57288"/>
        <dbReference type="EC" id="2.3.3.9"/>
    </reaction>
</comment>
<comment type="pathway">
    <text>Carbohydrate metabolism; glyoxylate cycle; (S)-malate from isocitrate: step 2/2.</text>
</comment>
<comment type="subcellular location">
    <subcellularLocation>
        <location evidence="1">Glyoxysome</location>
    </subcellularLocation>
</comment>
<comment type="similarity">
    <text evidence="3">Belongs to the malate synthase family.</text>
</comment>
<proteinExistence type="evidence at transcript level"/>
<gene>
    <name type="primary">MLS</name>
</gene>